<keyword id="KW-0448">Lipopolysaccharide biosynthesis</keyword>
<keyword id="KW-0520">NAD</keyword>
<keyword id="KW-0560">Oxidoreductase</keyword>
<reference key="1">
    <citation type="journal article" date="1995" name="Mol. Microbiol.">
        <title>Molecular characterization of the eps gene cluster of Pseudomonas solanacearum and its transcriptional regulation at a single promoter.</title>
        <authorList>
            <person name="Huang J."/>
            <person name="Schell M."/>
        </authorList>
    </citation>
    <scope>NUCLEOTIDE SEQUENCE [GENOMIC DNA]</scope>
    <source>
        <strain>AW</strain>
    </source>
</reference>
<comment type="function">
    <text>Probably involved in synthesis of sugar components of EPS I, by converting NDP-N-acetyl-D-galactosamine into NDP-N-acetyl-D-galactosaminuronic acid.</text>
</comment>
<comment type="similarity">
    <text evidence="3">Belongs to the UDP-glucose/GDP-mannose dehydrogenase family.</text>
</comment>
<protein>
    <recommendedName>
        <fullName>NDP-N-acetyl-D-galactosaminuronic acid dehydrogenase</fullName>
        <ecNumber>1.1.1.-</ecNumber>
    </recommendedName>
</protein>
<evidence type="ECO:0000250" key="1">
    <source>
        <dbReference type="UniProtKB" id="O59284"/>
    </source>
</evidence>
<evidence type="ECO:0000255" key="2"/>
<evidence type="ECO:0000305" key="3"/>
<sequence length="423" mass="46803">MDRAIEIDFRTISVVGLGYIGLPTATVLASRQRELIGVDINQHAVDTINQARIHIVEPDLDMLVRAAVSQGYLRATTEPEPADAFLIAVPTPFLEDKQPDLTYIEAAAKAIAPVLKRGDLVVLESTSPVGATEQLSAWLSEQRSDLSFPHQLGEESDIRVAHCPERVLPGHVLRELVENDRIIGGMTPRCSQAAQRLYELFVRGRCIVTDARTAEMCKLTENAFRDVNIAFANELSMICDEIGVNVWELISVANRHPRVNILQPGPGVGGHCIAVDPWFIVDAAPESARLIRTAREVNDAKPHYVLDRVKQAARRFKEPVIACFGLSFKANIDDLRESPAIEIVRTMVQQQLGTVLVVEPHIKVLPASLEGVELLNAEPALSRADIVVLLVDHQKFRKLDTDRLQSRVVIDTRGMWSAKRLAA</sequence>
<dbReference type="EC" id="1.1.1.-"/>
<dbReference type="EMBL" id="U17898">
    <property type="protein sequence ID" value="AAA91627.1"/>
    <property type="molecule type" value="Genomic_DNA"/>
</dbReference>
<dbReference type="PIR" id="S77638">
    <property type="entry name" value="S77638"/>
</dbReference>
<dbReference type="SMR" id="Q45410"/>
<dbReference type="GO" id="GO:0051287">
    <property type="term" value="F:NAD binding"/>
    <property type="evidence" value="ECO:0007669"/>
    <property type="project" value="InterPro"/>
</dbReference>
<dbReference type="GO" id="GO:0016628">
    <property type="term" value="F:oxidoreductase activity, acting on the CH-CH group of donors, NAD or NADP as acceptor"/>
    <property type="evidence" value="ECO:0007669"/>
    <property type="project" value="InterPro"/>
</dbReference>
<dbReference type="GO" id="GO:0016616">
    <property type="term" value="F:oxidoreductase activity, acting on the CH-OH group of donors, NAD or NADP as acceptor"/>
    <property type="evidence" value="ECO:0007669"/>
    <property type="project" value="InterPro"/>
</dbReference>
<dbReference type="GO" id="GO:0009103">
    <property type="term" value="P:lipopolysaccharide biosynthetic process"/>
    <property type="evidence" value="ECO:0007669"/>
    <property type="project" value="UniProtKB-KW"/>
</dbReference>
<dbReference type="FunFam" id="3.40.50.720:FF:000139">
    <property type="entry name" value="UDP-N-acetyl-D-mannosamine dehydrogenase"/>
    <property type="match status" value="1"/>
</dbReference>
<dbReference type="Gene3D" id="1.20.5.100">
    <property type="entry name" value="Cytochrome c1, transmembrane anchor, C-terminal"/>
    <property type="match status" value="1"/>
</dbReference>
<dbReference type="Gene3D" id="3.40.50.720">
    <property type="entry name" value="NAD(P)-binding Rossmann-like Domain"/>
    <property type="match status" value="2"/>
</dbReference>
<dbReference type="InterPro" id="IPR008927">
    <property type="entry name" value="6-PGluconate_DH-like_C_sf"/>
</dbReference>
<dbReference type="InterPro" id="IPR036291">
    <property type="entry name" value="NAD(P)-bd_dom_sf"/>
</dbReference>
<dbReference type="InterPro" id="IPR017476">
    <property type="entry name" value="UDP-Glc/GDP-Man"/>
</dbReference>
<dbReference type="InterPro" id="IPR014027">
    <property type="entry name" value="UDP-Glc/GDP-Man_DH_C"/>
</dbReference>
<dbReference type="InterPro" id="IPR036220">
    <property type="entry name" value="UDP-Glc/GDP-Man_DH_C_sf"/>
</dbReference>
<dbReference type="InterPro" id="IPR014026">
    <property type="entry name" value="UDP-Glc/GDP-Man_DH_dimer"/>
</dbReference>
<dbReference type="InterPro" id="IPR001732">
    <property type="entry name" value="UDP-Glc/GDP-Man_DH_N"/>
</dbReference>
<dbReference type="InterPro" id="IPR028359">
    <property type="entry name" value="UDP_ManNAc/GlcNAc_DH"/>
</dbReference>
<dbReference type="NCBIfam" id="TIGR03026">
    <property type="entry name" value="NDP-sugDHase"/>
    <property type="match status" value="1"/>
</dbReference>
<dbReference type="NCBIfam" id="NF008286">
    <property type="entry name" value="PRK11064.1"/>
    <property type="match status" value="1"/>
</dbReference>
<dbReference type="PANTHER" id="PTHR43491">
    <property type="entry name" value="UDP-N-ACETYL-D-MANNOSAMINE DEHYDROGENASE"/>
    <property type="match status" value="1"/>
</dbReference>
<dbReference type="PANTHER" id="PTHR43491:SF1">
    <property type="entry name" value="UDP-N-ACETYL-D-MANNOSAMINE DEHYDROGENASE"/>
    <property type="match status" value="1"/>
</dbReference>
<dbReference type="Pfam" id="PF00984">
    <property type="entry name" value="UDPG_MGDP_dh"/>
    <property type="match status" value="1"/>
</dbReference>
<dbReference type="Pfam" id="PF03720">
    <property type="entry name" value="UDPG_MGDP_dh_C"/>
    <property type="match status" value="1"/>
</dbReference>
<dbReference type="Pfam" id="PF03721">
    <property type="entry name" value="UDPG_MGDP_dh_N"/>
    <property type="match status" value="1"/>
</dbReference>
<dbReference type="PIRSF" id="PIRSF500136">
    <property type="entry name" value="UDP_ManNAc_DH"/>
    <property type="match status" value="1"/>
</dbReference>
<dbReference type="PIRSF" id="PIRSF000124">
    <property type="entry name" value="UDPglc_GDPman_dh"/>
    <property type="match status" value="1"/>
</dbReference>
<dbReference type="SMART" id="SM00984">
    <property type="entry name" value="UDPG_MGDP_dh_C"/>
    <property type="match status" value="1"/>
</dbReference>
<dbReference type="SUPFAM" id="SSF48179">
    <property type="entry name" value="6-phosphogluconate dehydrogenase C-terminal domain-like"/>
    <property type="match status" value="1"/>
</dbReference>
<dbReference type="SUPFAM" id="SSF51735">
    <property type="entry name" value="NAD(P)-binding Rossmann-fold domains"/>
    <property type="match status" value="1"/>
</dbReference>
<dbReference type="SUPFAM" id="SSF52413">
    <property type="entry name" value="UDP-glucose/GDP-mannose dehydrogenase C-terminal domain"/>
    <property type="match status" value="1"/>
</dbReference>
<accession>Q45410</accession>
<name>EPSD_RALSL</name>
<proteinExistence type="inferred from homology"/>
<feature type="chain" id="PRO_0000074074" description="NDP-N-acetyl-D-galactosaminuronic acid dehydrogenase">
    <location>
        <begin position="1"/>
        <end position="423"/>
    </location>
</feature>
<feature type="active site" description="Proton donor/acceptor" evidence="1">
    <location>
        <position position="218"/>
    </location>
</feature>
<feature type="active site" description="Nucleophile" evidence="1">
    <location>
        <position position="272"/>
    </location>
</feature>
<feature type="binding site" evidence="2">
    <location>
        <begin position="11"/>
        <end position="28"/>
    </location>
    <ligand>
        <name>NAD(+)</name>
        <dbReference type="ChEBI" id="CHEBI:57540"/>
    </ligand>
</feature>
<gene>
    <name type="primary">epsD</name>
</gene>
<organism>
    <name type="scientific">Ralstonia solanacearum</name>
    <name type="common">Pseudomonas solanacearum</name>
    <dbReference type="NCBI Taxonomy" id="305"/>
    <lineage>
        <taxon>Bacteria</taxon>
        <taxon>Pseudomonadati</taxon>
        <taxon>Pseudomonadota</taxon>
        <taxon>Betaproteobacteria</taxon>
        <taxon>Burkholderiales</taxon>
        <taxon>Burkholderiaceae</taxon>
        <taxon>Ralstonia</taxon>
        <taxon>Ralstonia solanacearum species complex</taxon>
    </lineage>
</organism>